<protein>
    <recommendedName>
        <fullName evidence="1">Sulfate adenylyltransferase subunit 2</fullName>
        <ecNumber evidence="1">2.7.7.4</ecNumber>
    </recommendedName>
    <alternativeName>
        <fullName evidence="1">ATP-sulfurylase small subunit</fullName>
    </alternativeName>
    <alternativeName>
        <fullName evidence="1">Sulfate adenylate transferase</fullName>
        <shortName evidence="1">SAT</shortName>
    </alternativeName>
</protein>
<accession>Q87WW0</accession>
<feature type="chain" id="PRO_0000100671" description="Sulfate adenylyltransferase subunit 2">
    <location>
        <begin position="1"/>
        <end position="305"/>
    </location>
</feature>
<feature type="helix" evidence="2">
    <location>
        <begin position="7"/>
        <end position="25"/>
    </location>
</feature>
<feature type="strand" evidence="2">
    <location>
        <begin position="27"/>
        <end position="32"/>
    </location>
</feature>
<feature type="helix" evidence="2">
    <location>
        <begin position="37"/>
        <end position="50"/>
    </location>
</feature>
<feature type="strand" evidence="2">
    <location>
        <begin position="59"/>
        <end position="62"/>
    </location>
</feature>
<feature type="helix" evidence="2">
    <location>
        <begin position="69"/>
        <end position="80"/>
    </location>
</feature>
<feature type="turn" evidence="2">
    <location>
        <begin position="81"/>
        <end position="83"/>
    </location>
</feature>
<feature type="strand" evidence="2">
    <location>
        <begin position="86"/>
        <end position="89"/>
    </location>
</feature>
<feature type="helix" evidence="2">
    <location>
        <begin position="108"/>
        <end position="113"/>
    </location>
</feature>
<feature type="helix" evidence="2">
    <location>
        <begin position="115"/>
        <end position="125"/>
    </location>
</feature>
<feature type="strand" evidence="2">
    <location>
        <begin position="128"/>
        <end position="131"/>
    </location>
</feature>
<feature type="helix" evidence="2">
    <location>
        <begin position="140"/>
        <end position="144"/>
    </location>
</feature>
<feature type="strand" evidence="2">
    <location>
        <begin position="147"/>
        <end position="151"/>
    </location>
</feature>
<feature type="helix" evidence="2">
    <location>
        <begin position="159"/>
        <end position="161"/>
    </location>
</feature>
<feature type="strand" evidence="2">
    <location>
        <begin position="179"/>
        <end position="182"/>
    </location>
</feature>
<feature type="turn" evidence="2">
    <location>
        <begin position="184"/>
        <end position="187"/>
    </location>
</feature>
<feature type="helix" evidence="2">
    <location>
        <begin position="190"/>
        <end position="200"/>
    </location>
</feature>
<keyword id="KW-0002">3D-structure</keyword>
<keyword id="KW-0067">ATP-binding</keyword>
<keyword id="KW-0547">Nucleotide-binding</keyword>
<keyword id="KW-0548">Nucleotidyltransferase</keyword>
<keyword id="KW-1185">Reference proteome</keyword>
<keyword id="KW-0808">Transferase</keyword>
<proteinExistence type="evidence at protein level"/>
<dbReference type="EC" id="2.7.7.4" evidence="1"/>
<dbReference type="EMBL" id="AE016853">
    <property type="protein sequence ID" value="AAO57882.1"/>
    <property type="molecule type" value="Genomic_DNA"/>
</dbReference>
<dbReference type="RefSeq" id="NP_794187.1">
    <property type="nucleotide sequence ID" value="NC_004578.1"/>
</dbReference>
<dbReference type="RefSeq" id="WP_003313577.1">
    <property type="nucleotide sequence ID" value="NC_004578.1"/>
</dbReference>
<dbReference type="PDB" id="1ZUN">
    <property type="method" value="X-ray"/>
    <property type="resolution" value="2.70 A"/>
    <property type="chains" value="A=1-305"/>
</dbReference>
<dbReference type="PDBsum" id="1ZUN"/>
<dbReference type="SMR" id="Q87WW0"/>
<dbReference type="STRING" id="223283.PSPTO_4433"/>
<dbReference type="GeneID" id="96220607"/>
<dbReference type="KEGG" id="pst:PSPTO_4433"/>
<dbReference type="PATRIC" id="fig|223283.9.peg.4548"/>
<dbReference type="eggNOG" id="COG0175">
    <property type="taxonomic scope" value="Bacteria"/>
</dbReference>
<dbReference type="HOGENOM" id="CLU_043026_0_0_6"/>
<dbReference type="OrthoDB" id="9772604at2"/>
<dbReference type="PhylomeDB" id="Q87WW0"/>
<dbReference type="UniPathway" id="UPA00140">
    <property type="reaction ID" value="UER00204"/>
</dbReference>
<dbReference type="EvolutionaryTrace" id="Q87WW0"/>
<dbReference type="Proteomes" id="UP000002515">
    <property type="component" value="Chromosome"/>
</dbReference>
<dbReference type="GO" id="GO:0005524">
    <property type="term" value="F:ATP binding"/>
    <property type="evidence" value="ECO:0007669"/>
    <property type="project" value="UniProtKB-KW"/>
</dbReference>
<dbReference type="GO" id="GO:0036094">
    <property type="term" value="F:small molecule binding"/>
    <property type="evidence" value="ECO:0000269"/>
    <property type="project" value="DisProt"/>
</dbReference>
<dbReference type="GO" id="GO:0004781">
    <property type="term" value="F:sulfate adenylyltransferase (ATP) activity"/>
    <property type="evidence" value="ECO:0007669"/>
    <property type="project" value="UniProtKB-UniRule"/>
</dbReference>
<dbReference type="GO" id="GO:0070814">
    <property type="term" value="P:hydrogen sulfide biosynthetic process"/>
    <property type="evidence" value="ECO:0007669"/>
    <property type="project" value="UniProtKB-UniRule"/>
</dbReference>
<dbReference type="GO" id="GO:0000103">
    <property type="term" value="P:sulfate assimilation"/>
    <property type="evidence" value="ECO:0007669"/>
    <property type="project" value="UniProtKB-UniRule"/>
</dbReference>
<dbReference type="CDD" id="cd23946">
    <property type="entry name" value="Sulfate_adenylyltransferase_2"/>
    <property type="match status" value="1"/>
</dbReference>
<dbReference type="DisProt" id="DP00985"/>
<dbReference type="FunFam" id="3.40.50.620:FF:000002">
    <property type="entry name" value="Sulfate adenylyltransferase subunit 2"/>
    <property type="match status" value="1"/>
</dbReference>
<dbReference type="Gene3D" id="3.40.50.620">
    <property type="entry name" value="HUPs"/>
    <property type="match status" value="1"/>
</dbReference>
<dbReference type="HAMAP" id="MF_00064">
    <property type="entry name" value="Sulf_adenylyltr_sub2"/>
    <property type="match status" value="1"/>
</dbReference>
<dbReference type="InterPro" id="IPR002500">
    <property type="entry name" value="PAPS_reduct_dom"/>
</dbReference>
<dbReference type="InterPro" id="IPR014729">
    <property type="entry name" value="Rossmann-like_a/b/a_fold"/>
</dbReference>
<dbReference type="InterPro" id="IPR011784">
    <property type="entry name" value="SO4_adenylTrfase_ssu"/>
</dbReference>
<dbReference type="InterPro" id="IPR050128">
    <property type="entry name" value="Sulfate_adenylyltrnsfr_sub2"/>
</dbReference>
<dbReference type="NCBIfam" id="TIGR02039">
    <property type="entry name" value="CysD"/>
    <property type="match status" value="1"/>
</dbReference>
<dbReference type="NCBIfam" id="NF003587">
    <property type="entry name" value="PRK05253.1"/>
    <property type="match status" value="1"/>
</dbReference>
<dbReference type="NCBIfam" id="NF009214">
    <property type="entry name" value="PRK12563.1"/>
    <property type="match status" value="1"/>
</dbReference>
<dbReference type="PANTHER" id="PTHR43196">
    <property type="entry name" value="SULFATE ADENYLYLTRANSFERASE SUBUNIT 2"/>
    <property type="match status" value="1"/>
</dbReference>
<dbReference type="PANTHER" id="PTHR43196:SF1">
    <property type="entry name" value="SULFATE ADENYLYLTRANSFERASE SUBUNIT 2"/>
    <property type="match status" value="1"/>
</dbReference>
<dbReference type="Pfam" id="PF01507">
    <property type="entry name" value="PAPS_reduct"/>
    <property type="match status" value="1"/>
</dbReference>
<dbReference type="PIRSF" id="PIRSF002936">
    <property type="entry name" value="CysDAde_trans"/>
    <property type="match status" value="1"/>
</dbReference>
<dbReference type="SUPFAM" id="SSF52402">
    <property type="entry name" value="Adenine nucleotide alpha hydrolases-like"/>
    <property type="match status" value="1"/>
</dbReference>
<reference key="1">
    <citation type="journal article" date="2003" name="Proc. Natl. Acad. Sci. U.S.A.">
        <title>The complete genome sequence of the Arabidopsis and tomato pathogen Pseudomonas syringae pv. tomato DC3000.</title>
        <authorList>
            <person name="Buell C.R."/>
            <person name="Joardar V."/>
            <person name="Lindeberg M."/>
            <person name="Selengut J."/>
            <person name="Paulsen I.T."/>
            <person name="Gwinn M.L."/>
            <person name="Dodson R.J."/>
            <person name="DeBoy R.T."/>
            <person name="Durkin A.S."/>
            <person name="Kolonay J.F."/>
            <person name="Madupu R."/>
            <person name="Daugherty S.C."/>
            <person name="Brinkac L.M."/>
            <person name="Beanan M.J."/>
            <person name="Haft D.H."/>
            <person name="Nelson W.C."/>
            <person name="Davidsen T.M."/>
            <person name="Zafar N."/>
            <person name="Zhou L."/>
            <person name="Liu J."/>
            <person name="Yuan Q."/>
            <person name="Khouri H.M."/>
            <person name="Fedorova N.B."/>
            <person name="Tran B."/>
            <person name="Russell D."/>
            <person name="Berry K.J."/>
            <person name="Utterback T.R."/>
            <person name="Van Aken S.E."/>
            <person name="Feldblyum T.V."/>
            <person name="D'Ascenzo M."/>
            <person name="Deng W.-L."/>
            <person name="Ramos A.R."/>
            <person name="Alfano J.R."/>
            <person name="Cartinhour S."/>
            <person name="Chatterjee A.K."/>
            <person name="Delaney T.P."/>
            <person name="Lazarowitz S.G."/>
            <person name="Martin G.B."/>
            <person name="Schneider D.J."/>
            <person name="Tang X."/>
            <person name="Bender C.L."/>
            <person name="White O."/>
            <person name="Fraser C.M."/>
            <person name="Collmer A."/>
        </authorList>
    </citation>
    <scope>NUCLEOTIDE SEQUENCE [LARGE SCALE GENOMIC DNA]</scope>
    <source>
        <strain>ATCC BAA-871 / DC3000</strain>
    </source>
</reference>
<gene>
    <name evidence="1" type="primary">cysD</name>
    <name type="ordered locus">PSPTO_4433</name>
</gene>
<organism>
    <name type="scientific">Pseudomonas syringae pv. tomato (strain ATCC BAA-871 / DC3000)</name>
    <dbReference type="NCBI Taxonomy" id="223283"/>
    <lineage>
        <taxon>Bacteria</taxon>
        <taxon>Pseudomonadati</taxon>
        <taxon>Pseudomonadota</taxon>
        <taxon>Gammaproteobacteria</taxon>
        <taxon>Pseudomonadales</taxon>
        <taxon>Pseudomonadaceae</taxon>
        <taxon>Pseudomonas</taxon>
    </lineage>
</organism>
<evidence type="ECO:0000255" key="1">
    <source>
        <dbReference type="HAMAP-Rule" id="MF_00064"/>
    </source>
</evidence>
<evidence type="ECO:0007829" key="2">
    <source>
        <dbReference type="PDB" id="1ZUN"/>
    </source>
</evidence>
<sequence length="305" mass="35312">MVDKLTHLKQLEAESIHIIREVAAEFDNPVMLYSIGKDSAVMLHLARKAFFPGKLPFPVMHVDTRWKFQEMYRFRDQMVEEMGLDLITHINPDGVAQGINPFTHGSAKHTDIMKTEGLKQALDKHGFDAAFGGARRDEEKSRAKERVYSFRDSKHRWDPKNQRPELWNVYNGNVNKGESIRVFPLSNWTELDIWQYIYLEGIPIVPLYFAAERDVIEKNGTLIMIDDERILEHLTDEEKSRIVKKKVRFRTLGCYPLTGAVESEATSLTDIIQEMLLTRTSERQGRVIDHDGAGSMEEKKRQGYF</sequence>
<name>CYSD_PSESM</name>
<comment type="function">
    <text evidence="1">With CysN forms the ATP sulfurylase (ATPS) that catalyzes the adenylation of sulfate producing adenosine 5'-phosphosulfate (APS) and diphosphate, the first enzymatic step in sulfur assimilation pathway. APS synthesis involves the formation of a high-energy phosphoric-sulfuric acid anhydride bond driven by GTP hydrolysis by CysN coupled to ATP hydrolysis by CysD.</text>
</comment>
<comment type="catalytic activity">
    <reaction evidence="1">
        <text>sulfate + ATP + H(+) = adenosine 5'-phosphosulfate + diphosphate</text>
        <dbReference type="Rhea" id="RHEA:18133"/>
        <dbReference type="ChEBI" id="CHEBI:15378"/>
        <dbReference type="ChEBI" id="CHEBI:16189"/>
        <dbReference type="ChEBI" id="CHEBI:30616"/>
        <dbReference type="ChEBI" id="CHEBI:33019"/>
        <dbReference type="ChEBI" id="CHEBI:58243"/>
        <dbReference type="EC" id="2.7.7.4"/>
    </reaction>
</comment>
<comment type="pathway">
    <text evidence="1">Sulfur metabolism; hydrogen sulfide biosynthesis; sulfite from sulfate: step 1/3.</text>
</comment>
<comment type="subunit">
    <text evidence="1">Heterodimer composed of CysD, the smaller subunit, and CysN.</text>
</comment>
<comment type="similarity">
    <text evidence="1">Belongs to the PAPS reductase family. CysD subfamily.</text>
</comment>